<name>DLGP1_MOUSE</name>
<feature type="chain" id="PRO_0000174289" description="Disks large-associated protein 1">
    <location>
        <begin position="1"/>
        <end position="992"/>
    </location>
</feature>
<feature type="region of interest" description="Disordered" evidence="3">
    <location>
        <begin position="150"/>
        <end position="209"/>
    </location>
</feature>
<feature type="region of interest" description="Disordered" evidence="3">
    <location>
        <begin position="355"/>
        <end position="376"/>
    </location>
</feature>
<feature type="region of interest" description="Interaction with DYL2" evidence="1">
    <location>
        <begin position="665"/>
        <end position="676"/>
    </location>
</feature>
<feature type="region of interest" description="Interaction with DYL2" evidence="1">
    <location>
        <begin position="687"/>
        <end position="698"/>
    </location>
</feature>
<feature type="region of interest" description="Disordered" evidence="3">
    <location>
        <begin position="914"/>
        <end position="980"/>
    </location>
</feature>
<feature type="short sequence motif" description="PDZ-binding" evidence="1">
    <location>
        <begin position="990"/>
        <end position="992"/>
    </location>
</feature>
<feature type="compositionally biased region" description="Low complexity" evidence="3">
    <location>
        <begin position="194"/>
        <end position="209"/>
    </location>
</feature>
<feature type="compositionally biased region" description="Basic and acidic residues" evidence="3">
    <location>
        <begin position="918"/>
        <end position="927"/>
    </location>
</feature>
<feature type="compositionally biased region" description="Basic and acidic residues" evidence="3">
    <location>
        <begin position="943"/>
        <end position="958"/>
    </location>
</feature>
<feature type="compositionally biased region" description="Polar residues" evidence="3">
    <location>
        <begin position="969"/>
        <end position="978"/>
    </location>
</feature>
<feature type="modified residue" description="Phosphoserine" evidence="12">
    <location>
        <position position="169"/>
    </location>
</feature>
<feature type="modified residue" description="Phosphoserine" evidence="11 12">
    <location>
        <position position="362"/>
    </location>
</feature>
<feature type="modified residue" description="Phosphoserine" evidence="12">
    <location>
        <position position="365"/>
    </location>
</feature>
<feature type="modified residue" description="Phosphoserine" evidence="12">
    <location>
        <position position="368"/>
    </location>
</feature>
<feature type="modified residue" description="Phosphoserine" evidence="12">
    <location>
        <position position="372"/>
    </location>
</feature>
<feature type="modified residue" description="Phosphoserine" evidence="2">
    <location>
        <position position="389"/>
    </location>
</feature>
<feature type="modified residue" description="Phosphoserine" evidence="12">
    <location>
        <position position="418"/>
    </location>
</feature>
<feature type="modified residue" description="Phosphoserine" evidence="12">
    <location>
        <position position="421"/>
    </location>
</feature>
<feature type="modified residue" description="Phosphoserine" evidence="12">
    <location>
        <position position="425"/>
    </location>
</feature>
<feature type="modified residue" description="Phosphoserine" evidence="2">
    <location>
        <position position="428"/>
    </location>
</feature>
<feature type="modified residue" description="Phosphoserine" evidence="12">
    <location>
        <position position="437"/>
    </location>
</feature>
<feature type="modified residue" description="Phosphoserine" evidence="11 12">
    <location>
        <position position="509"/>
    </location>
</feature>
<feature type="modified residue" description="Phosphoserine" evidence="11 12">
    <location>
        <position position="516"/>
    </location>
</feature>
<feature type="modified residue" description="Phosphoserine" evidence="12">
    <location>
        <position position="578"/>
    </location>
</feature>
<feature type="modified residue" description="Phosphothreonine" evidence="12">
    <location>
        <position position="579"/>
    </location>
</feature>
<feature type="modified residue" description="Phosphoserine" evidence="12">
    <location>
        <position position="581"/>
    </location>
</feature>
<feature type="modified residue" description="Phosphoserine" evidence="12">
    <location>
        <position position="605"/>
    </location>
</feature>
<feature type="modified residue" description="Phosphothreonine" evidence="12">
    <location>
        <position position="606"/>
    </location>
</feature>
<feature type="modified residue" description="Phosphoserine" evidence="12">
    <location>
        <position position="608"/>
    </location>
</feature>
<feature type="modified residue" description="Phosphoserine" evidence="2">
    <location>
        <position position="611"/>
    </location>
</feature>
<feature type="modified residue" description="Phosphoserine" evidence="11">
    <location>
        <position position="947"/>
    </location>
</feature>
<feature type="splice variant" id="VSP_015408" description="In isoform 6." evidence="8">
    <location>
        <begin position="398"/>
        <end position="992"/>
    </location>
</feature>
<feature type="splice variant" id="VSP_015409" description="In isoform 2 and isoform 4." evidence="7 8 9">
    <location>
        <begin position="537"/>
        <end position="546"/>
    </location>
</feature>
<feature type="splice variant" id="VSP_015410" description="In isoform 5." evidence="8">
    <original>V</original>
    <variation>E</variation>
    <location>
        <position position="538"/>
    </location>
</feature>
<feature type="splice variant" id="VSP_015411" description="In isoform 5." evidence="8">
    <location>
        <begin position="539"/>
        <end position="992"/>
    </location>
</feature>
<feature type="splice variant" id="VSP_015412" description="In isoform 3." evidence="6">
    <location>
        <begin position="547"/>
        <end position="574"/>
    </location>
</feature>
<feature type="splice variant" id="VSP_015413" description="In isoform 4." evidence="7 8">
    <original>ERRAPPPVPKKPAKGPAPLIR</original>
    <variation>VEQCRFCMVHLKPCTNAGQSK</variation>
    <location>
        <begin position="924"/>
        <end position="944"/>
    </location>
</feature>
<feature type="splice variant" id="VSP_015414" description="In isoform 4." evidence="7 8">
    <location>
        <begin position="945"/>
        <end position="992"/>
    </location>
</feature>
<feature type="sequence conflict" description="In Ref. 3; BAD90519." evidence="10" ref="3">
    <original>L</original>
    <variation>P</variation>
    <location>
        <position position="383"/>
    </location>
</feature>
<feature type="sequence conflict" description="In Ref. 1; AAP70755." evidence="10" ref="1">
    <original>K</original>
    <variation>R</variation>
    <location>
        <position position="397"/>
    </location>
</feature>
<feature type="sequence conflict" description="In Ref. 2; BAC27391." evidence="10" ref="2">
    <original>P</original>
    <variation>H</variation>
    <location>
        <position position="431"/>
    </location>
</feature>
<feature type="sequence conflict" description="In Ref. 2; BAC28619." evidence="10" ref="2">
    <original>S</original>
    <variation>F</variation>
    <location>
        <position position="752"/>
    </location>
</feature>
<feature type="helix" evidence="13">
    <location>
        <begin position="380"/>
        <end position="386"/>
    </location>
</feature>
<feature type="helix" evidence="14">
    <location>
        <begin position="411"/>
        <end position="417"/>
    </location>
</feature>
<dbReference type="EMBL" id="AY243846">
    <property type="protein sequence ID" value="AAP70755.2"/>
    <property type="molecule type" value="mRNA"/>
</dbReference>
<dbReference type="EMBL" id="AK031410">
    <property type="protein sequence ID" value="BAC27391.1"/>
    <property type="molecule type" value="mRNA"/>
</dbReference>
<dbReference type="EMBL" id="AK033901">
    <property type="protein sequence ID" value="BAC28508.1"/>
    <property type="molecule type" value="mRNA"/>
</dbReference>
<dbReference type="EMBL" id="AK034182">
    <property type="protein sequence ID" value="BAC28619.1"/>
    <property type="molecule type" value="mRNA"/>
</dbReference>
<dbReference type="EMBL" id="AK220515">
    <property type="protein sequence ID" value="BAD90519.1"/>
    <property type="status" value="ALT_INIT"/>
    <property type="molecule type" value="mRNA"/>
</dbReference>
<dbReference type="EMBL" id="BC062120">
    <property type="protein sequence ID" value="AAH62120.1"/>
    <property type="molecule type" value="mRNA"/>
</dbReference>
<dbReference type="EMBL" id="BC094369">
    <property type="protein sequence ID" value="AAH94369.1"/>
    <property type="molecule type" value="mRNA"/>
</dbReference>
<dbReference type="CCDS" id="CCDS28953.1">
    <molecule id="Q9D415-1"/>
</dbReference>
<dbReference type="CCDS" id="CCDS84331.1">
    <molecule id="Q9D415-3"/>
</dbReference>
<dbReference type="CCDS" id="CCDS84332.1">
    <molecule id="Q9D415-2"/>
</dbReference>
<dbReference type="RefSeq" id="NP_001334340.1">
    <molecule id="Q9D415-3"/>
    <property type="nucleotide sequence ID" value="NM_001347411.1"/>
</dbReference>
<dbReference type="RefSeq" id="NP_001334341.1">
    <molecule id="Q9D415-2"/>
    <property type="nucleotide sequence ID" value="NM_001347412.1"/>
</dbReference>
<dbReference type="RefSeq" id="NP_001347594.1">
    <molecule id="Q9D415-2"/>
    <property type="nucleotide sequence ID" value="NM_001360665.1"/>
</dbReference>
<dbReference type="RefSeq" id="NP_081988.3">
    <molecule id="Q9D415-4"/>
    <property type="nucleotide sequence ID" value="NM_027712.3"/>
</dbReference>
<dbReference type="RefSeq" id="NP_808307.2">
    <molecule id="Q9D415-1"/>
    <property type="nucleotide sequence ID" value="NM_177639.6"/>
</dbReference>
<dbReference type="RefSeq" id="XP_006524236.1">
    <molecule id="Q9D415-1"/>
    <property type="nucleotide sequence ID" value="XM_006524173.3"/>
</dbReference>
<dbReference type="RefSeq" id="XP_011244709.1">
    <molecule id="Q9D415-1"/>
    <property type="nucleotide sequence ID" value="XM_011246407.3"/>
</dbReference>
<dbReference type="RefSeq" id="XP_030105598.1">
    <molecule id="Q9D415-1"/>
    <property type="nucleotide sequence ID" value="XM_030249738.1"/>
</dbReference>
<dbReference type="RefSeq" id="XP_036016455.1">
    <molecule id="Q9D415-1"/>
    <property type="nucleotide sequence ID" value="XM_036160562.1"/>
</dbReference>
<dbReference type="RefSeq" id="XP_036016456.1">
    <molecule id="Q9D415-2"/>
    <property type="nucleotide sequence ID" value="XM_036160563.1"/>
</dbReference>
<dbReference type="RefSeq" id="XP_036016457.1">
    <molecule id="Q9D415-2"/>
    <property type="nucleotide sequence ID" value="XM_036160564.1"/>
</dbReference>
<dbReference type="PDB" id="7YKH">
    <property type="method" value="X-ray"/>
    <property type="resolution" value="2.50 A"/>
    <property type="chains" value="B/D=377-390"/>
</dbReference>
<dbReference type="PDB" id="7YKI">
    <property type="method" value="X-ray"/>
    <property type="resolution" value="2.00 A"/>
    <property type="chains" value="B/D=408-421"/>
</dbReference>
<dbReference type="PDBsum" id="7YKH"/>
<dbReference type="PDBsum" id="7YKI"/>
<dbReference type="SMR" id="Q9D415"/>
<dbReference type="BioGRID" id="230347">
    <property type="interactions" value="170"/>
</dbReference>
<dbReference type="CORUM" id="Q9D415"/>
<dbReference type="FunCoup" id="Q9D415">
    <property type="interactions" value="623"/>
</dbReference>
<dbReference type="IntAct" id="Q9D415">
    <property type="interactions" value="158"/>
</dbReference>
<dbReference type="MINT" id="Q9D415"/>
<dbReference type="STRING" id="10090.ENSMUSP00000122896"/>
<dbReference type="GlyGen" id="Q9D415">
    <property type="glycosylation" value="10 sites, 1 O-linked glycan (10 sites)"/>
</dbReference>
<dbReference type="iPTMnet" id="Q9D415"/>
<dbReference type="MetOSite" id="Q9D415"/>
<dbReference type="PhosphoSitePlus" id="Q9D415"/>
<dbReference type="SwissPalm" id="Q9D415"/>
<dbReference type="jPOST" id="Q9D415"/>
<dbReference type="PaxDb" id="10090-ENSMUSP00000122896"/>
<dbReference type="PeptideAtlas" id="Q9D415"/>
<dbReference type="ProteomicsDB" id="279780">
    <molecule id="Q9D415-1"/>
</dbReference>
<dbReference type="ProteomicsDB" id="279781">
    <molecule id="Q9D415-2"/>
</dbReference>
<dbReference type="ProteomicsDB" id="279782">
    <molecule id="Q9D415-3"/>
</dbReference>
<dbReference type="ProteomicsDB" id="279783">
    <molecule id="Q9D415-4"/>
</dbReference>
<dbReference type="ProteomicsDB" id="279784">
    <molecule id="Q9D415-5"/>
</dbReference>
<dbReference type="ProteomicsDB" id="279785">
    <molecule id="Q9D415-6"/>
</dbReference>
<dbReference type="ABCD" id="Q9D415">
    <property type="antibodies" value="3 sequenced antibodies"/>
</dbReference>
<dbReference type="Antibodypedia" id="21914">
    <property type="antibodies" value="236 antibodies from 39 providers"/>
</dbReference>
<dbReference type="DNASU" id="224997"/>
<dbReference type="Ensembl" id="ENSMUST00000060072.12">
    <molecule id="Q9D415-2"/>
    <property type="protein sequence ID" value="ENSMUSP00000052858.6"/>
    <property type="gene ID" value="ENSMUSG00000003279.18"/>
</dbReference>
<dbReference type="Ensembl" id="ENSMUST00000133983.8">
    <molecule id="Q9D415-2"/>
    <property type="protein sequence ID" value="ENSMUSP00000116716.2"/>
    <property type="gene ID" value="ENSMUSG00000003279.18"/>
</dbReference>
<dbReference type="Ensembl" id="ENSMUST00000135938.8">
    <molecule id="Q9D415-3"/>
    <property type="protein sequence ID" value="ENSMUSP00000118497.2"/>
    <property type="gene ID" value="ENSMUSG00000003279.18"/>
</dbReference>
<dbReference type="Ensembl" id="ENSMUST00000155016.8">
    <molecule id="Q9D415-1"/>
    <property type="protein sequence ID" value="ENSMUSP00000122896.2"/>
    <property type="gene ID" value="ENSMUSG00000003279.18"/>
</dbReference>
<dbReference type="GeneID" id="224997"/>
<dbReference type="KEGG" id="mmu:224997"/>
<dbReference type="UCSC" id="uc008dky.1">
    <molecule id="Q9D415-6"/>
    <property type="organism name" value="mouse"/>
</dbReference>
<dbReference type="UCSC" id="uc008dla.1">
    <molecule id="Q9D415-5"/>
    <property type="organism name" value="mouse"/>
</dbReference>
<dbReference type="UCSC" id="uc008dle.2">
    <molecule id="Q9D415-1"/>
    <property type="organism name" value="mouse"/>
</dbReference>
<dbReference type="UCSC" id="uc008dlf.2">
    <molecule id="Q9D415-4"/>
    <property type="organism name" value="mouse"/>
</dbReference>
<dbReference type="AGR" id="MGI:1346065"/>
<dbReference type="CTD" id="9229"/>
<dbReference type="MGI" id="MGI:1346065">
    <property type="gene designation" value="Dlgap1"/>
</dbReference>
<dbReference type="VEuPathDB" id="HostDB:ENSMUSG00000003279"/>
<dbReference type="eggNOG" id="KOG3971">
    <property type="taxonomic scope" value="Eukaryota"/>
</dbReference>
<dbReference type="GeneTree" id="ENSGT00940000156220"/>
<dbReference type="HOGENOM" id="CLU_010880_0_0_1"/>
<dbReference type="InParanoid" id="Q9D415"/>
<dbReference type="OMA" id="LSIGIQX"/>
<dbReference type="OrthoDB" id="10036956at2759"/>
<dbReference type="PhylomeDB" id="Q9D415"/>
<dbReference type="TreeFam" id="TF321382"/>
<dbReference type="Reactome" id="R-MMU-6794361">
    <property type="pathway name" value="Neurexins and neuroligins"/>
</dbReference>
<dbReference type="BioGRID-ORCS" id="224997">
    <property type="hits" value="2 hits in 76 CRISPR screens"/>
</dbReference>
<dbReference type="CD-CODE" id="50C2EE40">
    <property type="entry name" value="Presynaptic clusters"/>
</dbReference>
<dbReference type="CD-CODE" id="624CA2FF">
    <property type="entry name" value="Synthetic Condensate 000247"/>
</dbReference>
<dbReference type="CD-CODE" id="6D6C8CDE">
    <property type="entry name" value="Synthetic Condensate 000237"/>
</dbReference>
<dbReference type="CD-CODE" id="88B1263E">
    <property type="entry name" value="Synthetic Condensate 000240"/>
</dbReference>
<dbReference type="CD-CODE" id="9800A23F">
    <property type="entry name" value="Synthetic Condensate 000231"/>
</dbReference>
<dbReference type="CD-CODE" id="A08D2591">
    <property type="entry name" value="Synthetic Condensate 000245"/>
</dbReference>
<dbReference type="CD-CODE" id="A53DF2F0">
    <property type="entry name" value="Synthetic Condensate 000226"/>
</dbReference>
<dbReference type="CD-CODE" id="A81FC5A0">
    <property type="entry name" value="Synthetic Condensate 000233"/>
</dbReference>
<dbReference type="CD-CODE" id="CE726F99">
    <property type="entry name" value="Postsynaptic density"/>
</dbReference>
<dbReference type="CD-CODE" id="D23CAB07">
    <property type="entry name" value="Synthetic Condensate 000243"/>
</dbReference>
<dbReference type="CD-CODE" id="FCE689D0">
    <property type="entry name" value="Synthetic Condensate 000238"/>
</dbReference>
<dbReference type="ChiTaRS" id="Dlgap1">
    <property type="organism name" value="mouse"/>
</dbReference>
<dbReference type="PRO" id="PR:Q9D415"/>
<dbReference type="Proteomes" id="UP000000589">
    <property type="component" value="Chromosome 17"/>
</dbReference>
<dbReference type="RNAct" id="Q9D415">
    <property type="molecule type" value="protein"/>
</dbReference>
<dbReference type="Bgee" id="ENSMUSG00000003279">
    <property type="expression patterns" value="Expressed in piriform cortex and 161 other cell types or tissues"/>
</dbReference>
<dbReference type="ExpressionAtlas" id="Q9D415">
    <property type="expression patterns" value="baseline and differential"/>
</dbReference>
<dbReference type="GO" id="GO:0005886">
    <property type="term" value="C:plasma membrane"/>
    <property type="evidence" value="ECO:0007669"/>
    <property type="project" value="UniProtKB-SubCell"/>
</dbReference>
<dbReference type="GO" id="GO:0014069">
    <property type="term" value="C:postsynaptic density"/>
    <property type="evidence" value="ECO:0000314"/>
    <property type="project" value="BHF-UCL"/>
</dbReference>
<dbReference type="GO" id="GO:0045202">
    <property type="term" value="C:synapse"/>
    <property type="evidence" value="ECO:0000314"/>
    <property type="project" value="MGI"/>
</dbReference>
<dbReference type="GO" id="GO:0044877">
    <property type="term" value="F:protein-containing complex binding"/>
    <property type="evidence" value="ECO:0000250"/>
    <property type="project" value="UniProtKB"/>
</dbReference>
<dbReference type="GO" id="GO:0007268">
    <property type="term" value="P:chemical synaptic transmission"/>
    <property type="evidence" value="ECO:0000304"/>
    <property type="project" value="MGI"/>
</dbReference>
<dbReference type="InterPro" id="IPR005026">
    <property type="entry name" value="SAPAP"/>
</dbReference>
<dbReference type="PANTHER" id="PTHR12353:SF7">
    <property type="entry name" value="DISKS LARGE-ASSOCIATED PROTEIN 1"/>
    <property type="match status" value="1"/>
</dbReference>
<dbReference type="PANTHER" id="PTHR12353">
    <property type="entry name" value="DISKS LARGE-ASSOCIATED PROTEIN DAP SAP90/PSD-95-ASSOCIATED PROTEIN"/>
    <property type="match status" value="1"/>
</dbReference>
<dbReference type="Pfam" id="PF03359">
    <property type="entry name" value="GKAP"/>
    <property type="match status" value="1"/>
</dbReference>
<proteinExistence type="evidence at protein level"/>
<accession>Q9D415</accession>
<accession>Q52KF6</accession>
<accession>Q5DTK5</accession>
<accession>Q6P6N4</accession>
<accession>Q6XBF4</accession>
<accession>Q8BZL7</accession>
<accession>Q8BZQ1</accession>
<accession>Q8C0G0</accession>
<keyword id="KW-0002">3D-structure</keyword>
<keyword id="KW-0025">Alternative splicing</keyword>
<keyword id="KW-1003">Cell membrane</keyword>
<keyword id="KW-0472">Membrane</keyword>
<keyword id="KW-0597">Phosphoprotein</keyword>
<keyword id="KW-1185">Reference proteome</keyword>
<keyword id="KW-0770">Synapse</keyword>
<keyword id="KW-0832">Ubl conjugation</keyword>
<organism>
    <name type="scientific">Mus musculus</name>
    <name type="common">Mouse</name>
    <dbReference type="NCBI Taxonomy" id="10090"/>
    <lineage>
        <taxon>Eukaryota</taxon>
        <taxon>Metazoa</taxon>
        <taxon>Chordata</taxon>
        <taxon>Craniata</taxon>
        <taxon>Vertebrata</taxon>
        <taxon>Euteleostomi</taxon>
        <taxon>Mammalia</taxon>
        <taxon>Eutheria</taxon>
        <taxon>Euarchontoglires</taxon>
        <taxon>Glires</taxon>
        <taxon>Rodentia</taxon>
        <taxon>Myomorpha</taxon>
        <taxon>Muroidea</taxon>
        <taxon>Muridae</taxon>
        <taxon>Murinae</taxon>
        <taxon>Mus</taxon>
        <taxon>Mus</taxon>
    </lineage>
</organism>
<protein>
    <recommendedName>
        <fullName>Disks large-associated protein 1</fullName>
        <shortName>DAP-1</shortName>
    </recommendedName>
    <alternativeName>
        <fullName>Guanylate kinase-associated protein</fullName>
    </alternativeName>
    <alternativeName>
        <fullName>PSD-95/SAP90-binding protein 1</fullName>
    </alternativeName>
    <alternativeName>
        <fullName>SAP90/PSD-95-associated protein 1</fullName>
        <shortName>SAPAP1</shortName>
    </alternativeName>
</protein>
<sequence length="992" mass="110374">MKGLSGSRSHHHGITCEAACDSLSHHSDHKPYLLSPVDHHPADHPYYTQRNSFQAECVGPFSDPLASSTFPRRHYTSQQELKDESALVPRTLATKANRLPTNLLDQFERQLPLSRDGYHTLQYKRTAVEHRSDSPGRIRHLVHSVQKLFTKSHSLEGPSKGSVNGGKASPDESQTLRYGKRSKSKERRSESKARSNASNASPTSPSWWSSDDNLDGDMCLYHTPSGVMTMGRCPDRSASQYFMEAYNTISEQAVKASRSNNDIKCSTCANLPVTLDAPLLKKSAWSSTLTVSRAREVYQKASVNMDQAMVKSEACQQERSCQYLQVPQDEWSGYTPRGKDDEIPCRRMRSGSYIKAMGDEDSGDSDTSPKPSPKVAARRESYLKATQPSLTELTTLKISNEHSPKLQIRSHSYLRAVSEVSINRSLDSLDPAGLLTSPKFRSRNESYMRAMSTISQVSEMEVNGQFESVCESVFSELESQAVEALDLPLPGCFRMRSHSYVRAIEKGCSQDDECVSLRSSSPPRTTTTVRTIQSSTGVIKLSSAVEVSSCITTYKKTPPPVPPRTTTKPFISITAQSSTESAQDAYMDGQGQRGDMISQSGLSNSTESLDSMKALTAAIEAANAQIHGPASQHMGSNAAAVTTTTTIATVTTEDRKKDFKKNRCLSIGIQVDDAEEPEKMAESKTSNKFQSVGVQVEEEKCFRRFTRSNSVTTAVQADLDFHDNLENSLESIEDNSCPGPMARQFSRDASTSTVSIQGSGNHYHACAADDDFDTDFDPSILPPPDPWIDSITEDPLEAVQRSVCHRDGHWFLKLLQAERDRMEGWCKLMEREERENNLPEDILGKIRTAVGSAQLLMAQKFYQFRELCEENLNPNAHPRPTSQDLAGFWDMLQLSIENISMKFDELHQLKANNWKQMDPLDKKERRAPPPVPKKPAKGPAPLIRERSLESSQRQEARKRLMAAKRAASVRQNSATESAESIEIYIPEAQTRL</sequence>
<gene>
    <name type="primary">Dlgap1</name>
    <name type="synonym">Gkap</name>
    <name type="synonym">Kiaa4162</name>
</gene>
<reference key="1">
    <citation type="journal article" date="2004" name="J. Comp. Neurol.">
        <title>Differential mRNA expression and protein localization of the SAP90/PSD-95-associated proteins (SAPAPs) in the nervous system of the mouse.</title>
        <authorList>
            <person name="Welch J.M."/>
            <person name="Wang D."/>
            <person name="Feng G."/>
        </authorList>
    </citation>
    <scope>NUCLEOTIDE SEQUENCE [MRNA] (ISOFORM 3)</scope>
    <scope>TISSUE SPECIFICITY</scope>
    <source>
        <strain>ICR</strain>
    </source>
</reference>
<reference key="2">
    <citation type="journal article" date="2005" name="Science">
        <title>The transcriptional landscape of the mammalian genome.</title>
        <authorList>
            <person name="Carninci P."/>
            <person name="Kasukawa T."/>
            <person name="Katayama S."/>
            <person name="Gough J."/>
            <person name="Frith M.C."/>
            <person name="Maeda N."/>
            <person name="Oyama R."/>
            <person name="Ravasi T."/>
            <person name="Lenhard B."/>
            <person name="Wells C."/>
            <person name="Kodzius R."/>
            <person name="Shimokawa K."/>
            <person name="Bajic V.B."/>
            <person name="Brenner S.E."/>
            <person name="Batalov S."/>
            <person name="Forrest A.R."/>
            <person name="Zavolan M."/>
            <person name="Davis M.J."/>
            <person name="Wilming L.G."/>
            <person name="Aidinis V."/>
            <person name="Allen J.E."/>
            <person name="Ambesi-Impiombato A."/>
            <person name="Apweiler R."/>
            <person name="Aturaliya R.N."/>
            <person name="Bailey T.L."/>
            <person name="Bansal M."/>
            <person name="Baxter L."/>
            <person name="Beisel K.W."/>
            <person name="Bersano T."/>
            <person name="Bono H."/>
            <person name="Chalk A.M."/>
            <person name="Chiu K.P."/>
            <person name="Choudhary V."/>
            <person name="Christoffels A."/>
            <person name="Clutterbuck D.R."/>
            <person name="Crowe M.L."/>
            <person name="Dalla E."/>
            <person name="Dalrymple B.P."/>
            <person name="de Bono B."/>
            <person name="Della Gatta G."/>
            <person name="di Bernardo D."/>
            <person name="Down T."/>
            <person name="Engstrom P."/>
            <person name="Fagiolini M."/>
            <person name="Faulkner G."/>
            <person name="Fletcher C.F."/>
            <person name="Fukushima T."/>
            <person name="Furuno M."/>
            <person name="Futaki S."/>
            <person name="Gariboldi M."/>
            <person name="Georgii-Hemming P."/>
            <person name="Gingeras T.R."/>
            <person name="Gojobori T."/>
            <person name="Green R.E."/>
            <person name="Gustincich S."/>
            <person name="Harbers M."/>
            <person name="Hayashi Y."/>
            <person name="Hensch T.K."/>
            <person name="Hirokawa N."/>
            <person name="Hill D."/>
            <person name="Huminiecki L."/>
            <person name="Iacono M."/>
            <person name="Ikeo K."/>
            <person name="Iwama A."/>
            <person name="Ishikawa T."/>
            <person name="Jakt M."/>
            <person name="Kanapin A."/>
            <person name="Katoh M."/>
            <person name="Kawasawa Y."/>
            <person name="Kelso J."/>
            <person name="Kitamura H."/>
            <person name="Kitano H."/>
            <person name="Kollias G."/>
            <person name="Krishnan S.P."/>
            <person name="Kruger A."/>
            <person name="Kummerfeld S.K."/>
            <person name="Kurochkin I.V."/>
            <person name="Lareau L.F."/>
            <person name="Lazarevic D."/>
            <person name="Lipovich L."/>
            <person name="Liu J."/>
            <person name="Liuni S."/>
            <person name="McWilliam S."/>
            <person name="Madan Babu M."/>
            <person name="Madera M."/>
            <person name="Marchionni L."/>
            <person name="Matsuda H."/>
            <person name="Matsuzawa S."/>
            <person name="Miki H."/>
            <person name="Mignone F."/>
            <person name="Miyake S."/>
            <person name="Morris K."/>
            <person name="Mottagui-Tabar S."/>
            <person name="Mulder N."/>
            <person name="Nakano N."/>
            <person name="Nakauchi H."/>
            <person name="Ng P."/>
            <person name="Nilsson R."/>
            <person name="Nishiguchi S."/>
            <person name="Nishikawa S."/>
            <person name="Nori F."/>
            <person name="Ohara O."/>
            <person name="Okazaki Y."/>
            <person name="Orlando V."/>
            <person name="Pang K.C."/>
            <person name="Pavan W.J."/>
            <person name="Pavesi G."/>
            <person name="Pesole G."/>
            <person name="Petrovsky N."/>
            <person name="Piazza S."/>
            <person name="Reed J."/>
            <person name="Reid J.F."/>
            <person name="Ring B.Z."/>
            <person name="Ringwald M."/>
            <person name="Rost B."/>
            <person name="Ruan Y."/>
            <person name="Salzberg S.L."/>
            <person name="Sandelin A."/>
            <person name="Schneider C."/>
            <person name="Schoenbach C."/>
            <person name="Sekiguchi K."/>
            <person name="Semple C.A."/>
            <person name="Seno S."/>
            <person name="Sessa L."/>
            <person name="Sheng Y."/>
            <person name="Shibata Y."/>
            <person name="Shimada H."/>
            <person name="Shimada K."/>
            <person name="Silva D."/>
            <person name="Sinclair B."/>
            <person name="Sperling S."/>
            <person name="Stupka E."/>
            <person name="Sugiura K."/>
            <person name="Sultana R."/>
            <person name="Takenaka Y."/>
            <person name="Taki K."/>
            <person name="Tammoja K."/>
            <person name="Tan S.L."/>
            <person name="Tang S."/>
            <person name="Taylor M.S."/>
            <person name="Tegner J."/>
            <person name="Teichmann S.A."/>
            <person name="Ueda H.R."/>
            <person name="van Nimwegen E."/>
            <person name="Verardo R."/>
            <person name="Wei C.L."/>
            <person name="Yagi K."/>
            <person name="Yamanishi H."/>
            <person name="Zabarovsky E."/>
            <person name="Zhu S."/>
            <person name="Zimmer A."/>
            <person name="Hide W."/>
            <person name="Bult C."/>
            <person name="Grimmond S.M."/>
            <person name="Teasdale R.D."/>
            <person name="Liu E.T."/>
            <person name="Brusic V."/>
            <person name="Quackenbush J."/>
            <person name="Wahlestedt C."/>
            <person name="Mattick J.S."/>
            <person name="Hume D.A."/>
            <person name="Kai C."/>
            <person name="Sasaki D."/>
            <person name="Tomaru Y."/>
            <person name="Fukuda S."/>
            <person name="Kanamori-Katayama M."/>
            <person name="Suzuki M."/>
            <person name="Aoki J."/>
            <person name="Arakawa T."/>
            <person name="Iida J."/>
            <person name="Imamura K."/>
            <person name="Itoh M."/>
            <person name="Kato T."/>
            <person name="Kawaji H."/>
            <person name="Kawagashira N."/>
            <person name="Kawashima T."/>
            <person name="Kojima M."/>
            <person name="Kondo S."/>
            <person name="Konno H."/>
            <person name="Nakano K."/>
            <person name="Ninomiya N."/>
            <person name="Nishio T."/>
            <person name="Okada M."/>
            <person name="Plessy C."/>
            <person name="Shibata K."/>
            <person name="Shiraki T."/>
            <person name="Suzuki S."/>
            <person name="Tagami M."/>
            <person name="Waki K."/>
            <person name="Watahiki A."/>
            <person name="Okamura-Oho Y."/>
            <person name="Suzuki H."/>
            <person name="Kawai J."/>
            <person name="Hayashizaki Y."/>
        </authorList>
    </citation>
    <scope>NUCLEOTIDE SEQUENCE [LARGE SCALE MRNA] (ISOFORMS 5 AND 6)</scope>
    <scope>NUCLEOTIDE SEQUENCE [LARGE SCALE MRNA] OF 660-992 (ISOFORM 4)</scope>
    <source>
        <strain>C57BL/6J</strain>
        <tissue>Diencephalon</tissue>
        <tissue>Testis</tissue>
    </source>
</reference>
<reference key="3">
    <citation type="submission" date="2005-02" db="EMBL/GenBank/DDBJ databases">
        <title>Prediction of the coding sequences of mouse homologues of KIAA gene. The complete nucleotide sequences of mouse KIAA-homologous cDNAs identified by screening of terminal sequences of cDNA clones randomly sampled from size-fractionated libraries.</title>
        <authorList>
            <person name="Okazaki N."/>
            <person name="Kikuno R.F."/>
            <person name="Ohara R."/>
            <person name="Inamoto S."/>
            <person name="Nagase T."/>
            <person name="Ohara O."/>
            <person name="Koga H."/>
        </authorList>
    </citation>
    <scope>NUCLEOTIDE SEQUENCE [LARGE SCALE MRNA] (ISOFORM 2)</scope>
    <source>
        <tissue>Fetal brain</tissue>
    </source>
</reference>
<reference key="4">
    <citation type="journal article" date="2004" name="Genome Res.">
        <title>The status, quality, and expansion of the NIH full-length cDNA project: the Mammalian Gene Collection (MGC).</title>
        <authorList>
            <consortium name="The MGC Project Team"/>
        </authorList>
    </citation>
    <scope>NUCLEOTIDE SEQUENCE [LARGE SCALE MRNA] (ISOFORM 1)</scope>
    <scope>NUCLEOTIDE SEQUENCE [LARGE SCALE MRNA] OF 210-992 (ISOFORM 4)</scope>
    <source>
        <strain>C57BL/6J</strain>
        <tissue>Brain</tissue>
    </source>
</reference>
<reference key="5">
    <citation type="journal article" date="2006" name="Mol. Cell. Proteomics">
        <title>Comprehensive identification of phosphorylation sites in postsynaptic density preparations.</title>
        <authorList>
            <person name="Trinidad J.C."/>
            <person name="Specht C.G."/>
            <person name="Thalhammer A."/>
            <person name="Schoepfer R."/>
            <person name="Burlingame A.L."/>
        </authorList>
    </citation>
    <scope>PHOSPHORYLATION [LARGE SCALE ANALYSIS] AT SER-362; SER-509; SER-516 AND SER-947</scope>
    <scope>IDENTIFICATION BY MASS SPECTROMETRY [LARGE SCALE ANALYSIS]</scope>
    <source>
        <tissue>Brain</tissue>
    </source>
</reference>
<reference key="6">
    <citation type="journal article" date="2007" name="Mol. Cell. Proteomics">
        <title>Qualitative and quantitative analyses of protein phosphorylation in naive and stimulated mouse synaptosomal preparations.</title>
        <authorList>
            <person name="Munton R.P."/>
            <person name="Tweedie-Cullen R."/>
            <person name="Livingstone-Zatchej M."/>
            <person name="Weinandy F."/>
            <person name="Waidelich M."/>
            <person name="Longo D."/>
            <person name="Gehrig P."/>
            <person name="Potthast F."/>
            <person name="Rutishauser D."/>
            <person name="Gerrits B."/>
            <person name="Panse C."/>
            <person name="Schlapbach R."/>
            <person name="Mansuy I.M."/>
        </authorList>
    </citation>
    <scope>IDENTIFICATION BY MASS SPECTROMETRY [LARGE SCALE ANALYSIS]</scope>
    <source>
        <tissue>Brain cortex</tissue>
    </source>
</reference>
<reference key="7">
    <citation type="journal article" date="2010" name="Cell">
        <title>A tissue-specific atlas of mouse protein phosphorylation and expression.</title>
        <authorList>
            <person name="Huttlin E.L."/>
            <person name="Jedrychowski M.P."/>
            <person name="Elias J.E."/>
            <person name="Goswami T."/>
            <person name="Rad R."/>
            <person name="Beausoleil S.A."/>
            <person name="Villen J."/>
            <person name="Haas W."/>
            <person name="Sowa M.E."/>
            <person name="Gygi S.P."/>
        </authorList>
    </citation>
    <scope>PHOSPHORYLATION [LARGE SCALE ANALYSIS] AT SER-169; SER-362; SER-365; SER-368; SER-372; SER-418; SER-421; SER-425; SER-437; SER-509; SER-516; SER-578; THR-579; SER-581; SER-605; THR-606 AND SER-608</scope>
    <scope>IDENTIFICATION BY MASS SPECTROMETRY [LARGE SCALE ANALYSIS]</scope>
    <source>
        <tissue>Brain</tissue>
    </source>
</reference>
<reference key="8">
    <citation type="journal article" date="2013" name="Nature">
        <title>SHANK3 overexpression causes manic-like behaviour with unique pharmacogenetic properties.</title>
        <authorList>
            <person name="Han K."/>
            <person name="Holder J.L. Jr."/>
            <person name="Schaaf C.P."/>
            <person name="Lu H."/>
            <person name="Chen H."/>
            <person name="Kang H."/>
            <person name="Tang J."/>
            <person name="Wu Z."/>
            <person name="Hao S."/>
            <person name="Cheung S.W."/>
            <person name="Yu P."/>
            <person name="Sun H."/>
            <person name="Breman A.M."/>
            <person name="Patel A."/>
            <person name="Lu H.C."/>
            <person name="Zoghbi H.Y."/>
        </authorList>
    </citation>
    <scope>INTERACTION WITH SHANK3</scope>
    <scope>SUBCELLULAR LOCATION</scope>
</reference>
<evidence type="ECO:0000250" key="1"/>
<evidence type="ECO:0000250" key="2">
    <source>
        <dbReference type="UniProtKB" id="P97836"/>
    </source>
</evidence>
<evidence type="ECO:0000256" key="3">
    <source>
        <dbReference type="SAM" id="MobiDB-lite"/>
    </source>
</evidence>
<evidence type="ECO:0000269" key="4">
    <source>
    </source>
</evidence>
<evidence type="ECO:0000269" key="5">
    <source>
    </source>
</evidence>
<evidence type="ECO:0000303" key="6">
    <source>
    </source>
</evidence>
<evidence type="ECO:0000303" key="7">
    <source>
    </source>
</evidence>
<evidence type="ECO:0000303" key="8">
    <source>
    </source>
</evidence>
<evidence type="ECO:0000303" key="9">
    <source ref="3"/>
</evidence>
<evidence type="ECO:0000305" key="10"/>
<evidence type="ECO:0007744" key="11">
    <source>
    </source>
</evidence>
<evidence type="ECO:0007744" key="12">
    <source>
    </source>
</evidence>
<evidence type="ECO:0007829" key="13">
    <source>
        <dbReference type="PDB" id="7YKH"/>
    </source>
</evidence>
<evidence type="ECO:0007829" key="14">
    <source>
        <dbReference type="PDB" id="7YKI"/>
    </source>
</evidence>
<comment type="function">
    <text>Part of the postsynaptic scaffold in neuronal cells.</text>
</comment>
<comment type="subunit">
    <text evidence="2 5">Interacts with the guanylate kinase-like domain of DLG1, DLG2, DLG3, DLG4 and AIP1. Interacts with the PDZ domain of SHANK1, SHANK2 and SHANK3. Found in a complex with DLG4 and SHANK1, SHANK2 or SHANK3. Found in a complex with DLG4 and BEGAIN. Interacts with DYL2 and LRFN1. Interacts with MPP2 (via the SH3-Guanylate kinase-like sub-module) (By similarity).</text>
</comment>
<comment type="interaction">
    <interactant intactId="EBI-400152">
        <id>Q9D415</id>
    </interactant>
    <interactant intactId="EBI-771429">
        <id>Q80YA9</id>
        <label>Cnksr2</label>
    </interactant>
    <organismsDiffer>false</organismsDiffer>
    <experiments>3</experiments>
</comment>
<comment type="interaction">
    <interactant intactId="EBI-400152">
        <id>Q9D415</id>
    </interactant>
    <interactant intactId="EBI-400115">
        <id>P35436</id>
        <label>Grin2a</label>
    </interactant>
    <organismsDiffer>false</organismsDiffer>
    <experiments>2</experiments>
</comment>
<comment type="interaction">
    <interactant intactId="EBI-400152">
        <id>Q9D415</id>
    </interactant>
    <interactant intactId="EBI-396980">
        <id>Q9Z2Y3</id>
        <label>Homer1</label>
    </interactant>
    <organismsDiffer>false</organismsDiffer>
    <experiments>4</experiments>
</comment>
<comment type="interaction">
    <interactant intactId="EBI-400152">
        <id>Q9D415</id>
    </interactant>
    <interactant intactId="EBI-771450">
        <id>Q4ACU6</id>
        <label>Shank3</label>
    </interactant>
    <organismsDiffer>false</organismsDiffer>
    <experiments>4</experiments>
</comment>
<comment type="interaction">
    <interactant intactId="EBI-400152">
        <id>Q9D415</id>
    </interactant>
    <interactant intactId="EBI-5797569">
        <id>F6SEU4</id>
        <label>Syngap1</label>
    </interactant>
    <organismsDiffer>false</organismsDiffer>
    <experiments>3</experiments>
</comment>
<comment type="subcellular location">
    <subcellularLocation>
        <location evidence="1">Cell membrane</location>
        <topology evidence="1">Peripheral membrane protein</topology>
    </subcellularLocation>
    <subcellularLocation>
        <location evidence="1">Postsynaptic density</location>
    </subcellularLocation>
    <subcellularLocation>
        <location evidence="5">Synapse</location>
    </subcellularLocation>
</comment>
<comment type="alternative products">
    <event type="alternative splicing"/>
    <isoform>
        <id>Q9D415-1</id>
        <name>1</name>
        <name>SAPAP1</name>
        <sequence type="displayed"/>
    </isoform>
    <isoform>
        <id>Q9D415-2</id>
        <name>2</name>
        <sequence type="described" ref="VSP_015409"/>
    </isoform>
    <isoform>
        <id>Q9D415-3</id>
        <name>3</name>
        <name>GKAP1a</name>
        <sequence type="described" ref="VSP_015412"/>
    </isoform>
    <isoform>
        <id>Q9D415-4</id>
        <name>4</name>
        <name>GKAP1b</name>
        <sequence type="described" ref="VSP_015409 VSP_015413 VSP_015414"/>
    </isoform>
    <isoform>
        <id>Q9D415-5</id>
        <name>5</name>
        <sequence type="described" ref="VSP_015410 VSP_015411"/>
    </isoform>
    <isoform>
        <id>Q9D415-6</id>
        <name>6</name>
        <sequence type="described" ref="VSP_015408"/>
    </isoform>
</comment>
<comment type="tissue specificity">
    <text evidence="4">Highest levels in the neocortex, part of the hippocampus, the granule cell layer of the cerebellum, the glomerular layer of the olfactory bulb, the inner plexiform layer of the retina, the ventral and dorsal horn of the spinal cord, the neuromuscular junction and the submandibular ganglion.</text>
</comment>
<comment type="PTM">
    <text evidence="2">Ubiquitinated by TRIM3; leading to proteasomal degradation.</text>
</comment>
<comment type="similarity">
    <text evidence="10">Belongs to the SAPAP family.</text>
</comment>
<comment type="sequence caution" evidence="10">
    <conflict type="erroneous initiation">
        <sequence resource="EMBL-CDS" id="BAD90519"/>
    </conflict>
    <text>Extended N-terminus.</text>
</comment>